<accession>P0A3Q6</accession>
<accession>P38436</accession>
<protein>
    <recommendedName>
        <fullName evidence="1">tRNA dimethylallyltransferase</fullName>
        <ecNumber evidence="1">2.5.1.75</ecNumber>
    </recommendedName>
    <alternativeName>
        <fullName evidence="1">Dimethylallyl diphosphate:tRNA dimethylallyltransferase</fullName>
        <shortName evidence="1">DMAPP:tRNA dimethylallyltransferase</shortName>
        <shortName evidence="1">DMATase</shortName>
    </alternativeName>
    <alternativeName>
        <fullName evidence="1">Isopentenyl-diphosphate:tRNA isopentenyltransferase</fullName>
        <shortName evidence="1">IPP transferase</shortName>
        <shortName evidence="1">IPPT</shortName>
        <shortName evidence="1">IPTase</shortName>
    </alternativeName>
</protein>
<reference key="1">
    <citation type="journal article" date="1992" name="J. Bacteriol.">
        <title>Mutation of the miaA gene of Agrobacterium tumefaciens results in reduced vir gene expression.</title>
        <authorList>
            <person name="Gray J."/>
            <person name="Wang J."/>
            <person name="Gelvin S.B."/>
        </authorList>
    </citation>
    <scope>NUCLEOTIDE SEQUENCE [GENOMIC DNA]</scope>
</reference>
<feature type="chain" id="PRO_0000163865" description="tRNA dimethylallyltransferase">
    <location>
        <begin position="1"/>
        <end position="298"/>
    </location>
</feature>
<feature type="region of interest" description="Interaction with substrate tRNA" evidence="1">
    <location>
        <begin position="41"/>
        <end position="44"/>
    </location>
</feature>
<feature type="region of interest" description="Interaction with substrate tRNA" evidence="1">
    <location>
        <begin position="165"/>
        <end position="169"/>
    </location>
</feature>
<feature type="binding site" evidence="1">
    <location>
        <begin position="16"/>
        <end position="23"/>
    </location>
    <ligand>
        <name>ATP</name>
        <dbReference type="ChEBI" id="CHEBI:30616"/>
    </ligand>
</feature>
<feature type="binding site" evidence="1">
    <location>
        <begin position="18"/>
        <end position="23"/>
    </location>
    <ligand>
        <name>substrate</name>
    </ligand>
</feature>
<feature type="site" description="Interaction with substrate tRNA" evidence="1">
    <location>
        <position position="107"/>
    </location>
</feature>
<feature type="site" description="Interaction with substrate tRNA" evidence="1">
    <location>
        <position position="129"/>
    </location>
</feature>
<proteinExistence type="inferred from homology"/>
<keyword id="KW-0067">ATP-binding</keyword>
<keyword id="KW-0460">Magnesium</keyword>
<keyword id="KW-0547">Nucleotide-binding</keyword>
<keyword id="KW-0808">Transferase</keyword>
<keyword id="KW-0819">tRNA processing</keyword>
<keyword id="KW-0843">Virulence</keyword>
<organism>
    <name type="scientific">Rhizobium radiobacter</name>
    <name type="common">Agrobacterium tumefaciens</name>
    <name type="synonym">Agrobacterium radiobacter</name>
    <dbReference type="NCBI Taxonomy" id="358"/>
    <lineage>
        <taxon>Bacteria</taxon>
        <taxon>Pseudomonadati</taxon>
        <taxon>Pseudomonadota</taxon>
        <taxon>Alphaproteobacteria</taxon>
        <taxon>Hyphomicrobiales</taxon>
        <taxon>Rhizobiaceae</taxon>
        <taxon>Rhizobium/Agrobacterium group</taxon>
        <taxon>Agrobacterium</taxon>
        <taxon>Agrobacterium tumefaciens complex</taxon>
    </lineage>
</organism>
<comment type="function">
    <text evidence="1">Catalyzes the transfer of a dimethylallyl group onto the adenine at position 37 in tRNAs that read codons beginning with uridine, leading to the formation of N6-(dimethylallyl)adenosine (i(6)A).</text>
</comment>
<comment type="catalytic activity">
    <reaction evidence="1">
        <text>adenosine(37) in tRNA + dimethylallyl diphosphate = N(6)-dimethylallyladenosine(37) in tRNA + diphosphate</text>
        <dbReference type="Rhea" id="RHEA:26482"/>
        <dbReference type="Rhea" id="RHEA-COMP:10162"/>
        <dbReference type="Rhea" id="RHEA-COMP:10375"/>
        <dbReference type="ChEBI" id="CHEBI:33019"/>
        <dbReference type="ChEBI" id="CHEBI:57623"/>
        <dbReference type="ChEBI" id="CHEBI:74411"/>
        <dbReference type="ChEBI" id="CHEBI:74415"/>
        <dbReference type="EC" id="2.5.1.75"/>
    </reaction>
</comment>
<comment type="cofactor">
    <cofactor evidence="1">
        <name>Mg(2+)</name>
        <dbReference type="ChEBI" id="CHEBI:18420"/>
    </cofactor>
</comment>
<comment type="subunit">
    <text evidence="1">Monomer.</text>
</comment>
<comment type="similarity">
    <text evidence="1">Belongs to the IPP transferase family.</text>
</comment>
<comment type="caution">
    <text evidence="2">It is uncertain whether Met-1 or Met-2 is the initiator.</text>
</comment>
<name>MIAA_RHIRD</name>
<sequence>MMKNLDQNFDAILITGPTASGKSALALRLARERNGVVINADSMQVYDTLRVLTARPSDHEMEGVPHRLYGHVPAGSAYSTGEWLRDISGLLSDLRGEGRFPVIVGGTGLYFKALTGGLSDMPAIPDDLREGLRARLIEEGAAKLHAELVSRDPSMAQMLQPGDGQRIVRALEVLEATGKSIRDFQRASGPMIIDPERAQKFIVLPERPVLHDRINRRFEAMMDSGAVEEVQALLALNLAPDATAMKAIGVAQIADMLTGRMGAAEVIEKSAAATRQYAKRQMTWFRNQMGDDWTRIQP</sequence>
<dbReference type="EC" id="2.5.1.75" evidence="1"/>
<dbReference type="EMBL" id="M83532">
    <property type="protein sequence ID" value="AAA22091.1"/>
    <property type="molecule type" value="Genomic_DNA"/>
</dbReference>
<dbReference type="PIR" id="B42643">
    <property type="entry name" value="B42643"/>
</dbReference>
<dbReference type="SMR" id="P0A3Q6"/>
<dbReference type="DNASU" id="1134077"/>
<dbReference type="eggNOG" id="COG0324">
    <property type="taxonomic scope" value="Bacteria"/>
</dbReference>
<dbReference type="GO" id="GO:0005524">
    <property type="term" value="F:ATP binding"/>
    <property type="evidence" value="ECO:0007669"/>
    <property type="project" value="UniProtKB-UniRule"/>
</dbReference>
<dbReference type="GO" id="GO:0052381">
    <property type="term" value="F:tRNA dimethylallyltransferase activity"/>
    <property type="evidence" value="ECO:0007669"/>
    <property type="project" value="UniProtKB-UniRule"/>
</dbReference>
<dbReference type="GO" id="GO:0006400">
    <property type="term" value="P:tRNA modification"/>
    <property type="evidence" value="ECO:0007669"/>
    <property type="project" value="TreeGrafter"/>
</dbReference>
<dbReference type="Gene3D" id="1.10.20.140">
    <property type="match status" value="1"/>
</dbReference>
<dbReference type="Gene3D" id="3.40.50.300">
    <property type="entry name" value="P-loop containing nucleotide triphosphate hydrolases"/>
    <property type="match status" value="1"/>
</dbReference>
<dbReference type="HAMAP" id="MF_00185">
    <property type="entry name" value="IPP_trans"/>
    <property type="match status" value="1"/>
</dbReference>
<dbReference type="InterPro" id="IPR039657">
    <property type="entry name" value="Dimethylallyltransferase"/>
</dbReference>
<dbReference type="InterPro" id="IPR018022">
    <property type="entry name" value="IPT"/>
</dbReference>
<dbReference type="InterPro" id="IPR027417">
    <property type="entry name" value="P-loop_NTPase"/>
</dbReference>
<dbReference type="NCBIfam" id="TIGR00174">
    <property type="entry name" value="miaA"/>
    <property type="match status" value="1"/>
</dbReference>
<dbReference type="PANTHER" id="PTHR11088">
    <property type="entry name" value="TRNA DIMETHYLALLYLTRANSFERASE"/>
    <property type="match status" value="1"/>
</dbReference>
<dbReference type="PANTHER" id="PTHR11088:SF60">
    <property type="entry name" value="TRNA DIMETHYLALLYLTRANSFERASE"/>
    <property type="match status" value="1"/>
</dbReference>
<dbReference type="Pfam" id="PF01715">
    <property type="entry name" value="IPPT"/>
    <property type="match status" value="1"/>
</dbReference>
<dbReference type="SUPFAM" id="SSF52540">
    <property type="entry name" value="P-loop containing nucleoside triphosphate hydrolases"/>
    <property type="match status" value="2"/>
</dbReference>
<gene>
    <name evidence="1" type="primary">miaA</name>
</gene>
<evidence type="ECO:0000255" key="1">
    <source>
        <dbReference type="HAMAP-Rule" id="MF_00185"/>
    </source>
</evidence>
<evidence type="ECO:0000305" key="2"/>